<gene>
    <name type="primary">parE</name>
    <name evidence="3" type="synonym">gyrB</name>
    <name type="ordered locus">MCAP_0457</name>
</gene>
<accession>P50028</accession>
<accession>Q2SS32</accession>
<dbReference type="EC" id="5.6.2.2" evidence="2"/>
<dbReference type="EMBL" id="D28808">
    <property type="protein sequence ID" value="BAA05969.1"/>
    <property type="molecule type" value="Genomic_DNA"/>
</dbReference>
<dbReference type="EMBL" id="D21231">
    <property type="protein sequence ID" value="BAA04763.1"/>
    <property type="molecule type" value="Genomic_DNA"/>
</dbReference>
<dbReference type="EMBL" id="D26016">
    <property type="protein sequence ID" value="BAA05031.1"/>
    <property type="molecule type" value="Genomic_DNA"/>
</dbReference>
<dbReference type="EMBL" id="CP000123">
    <property type="protein sequence ID" value="ABC01260.1"/>
    <property type="molecule type" value="Genomic_DNA"/>
</dbReference>
<dbReference type="RefSeq" id="WP_011387330.1">
    <property type="nucleotide sequence ID" value="NC_007633.1"/>
</dbReference>
<dbReference type="SMR" id="P50028"/>
<dbReference type="GeneID" id="23778587"/>
<dbReference type="KEGG" id="mcp:MCAP_0457"/>
<dbReference type="HOGENOM" id="CLU_006146_4_1_14"/>
<dbReference type="Proteomes" id="UP000001928">
    <property type="component" value="Chromosome"/>
</dbReference>
<dbReference type="GO" id="GO:0005694">
    <property type="term" value="C:chromosome"/>
    <property type="evidence" value="ECO:0007669"/>
    <property type="project" value="InterPro"/>
</dbReference>
<dbReference type="GO" id="GO:0005737">
    <property type="term" value="C:cytoplasm"/>
    <property type="evidence" value="ECO:0007669"/>
    <property type="project" value="UniProtKB-SubCell"/>
</dbReference>
<dbReference type="GO" id="GO:0005524">
    <property type="term" value="F:ATP binding"/>
    <property type="evidence" value="ECO:0007669"/>
    <property type="project" value="UniProtKB-KW"/>
</dbReference>
<dbReference type="GO" id="GO:0003677">
    <property type="term" value="F:DNA binding"/>
    <property type="evidence" value="ECO:0007669"/>
    <property type="project" value="UniProtKB-KW"/>
</dbReference>
<dbReference type="GO" id="GO:0034335">
    <property type="term" value="F:DNA negative supercoiling activity"/>
    <property type="evidence" value="ECO:0007669"/>
    <property type="project" value="UniProtKB-ARBA"/>
</dbReference>
<dbReference type="GO" id="GO:0046872">
    <property type="term" value="F:metal ion binding"/>
    <property type="evidence" value="ECO:0007669"/>
    <property type="project" value="UniProtKB-KW"/>
</dbReference>
<dbReference type="GO" id="GO:0006265">
    <property type="term" value="P:DNA topological change"/>
    <property type="evidence" value="ECO:0007669"/>
    <property type="project" value="InterPro"/>
</dbReference>
<dbReference type="CDD" id="cd16928">
    <property type="entry name" value="HATPase_GyrB-like"/>
    <property type="match status" value="1"/>
</dbReference>
<dbReference type="CDD" id="cd00329">
    <property type="entry name" value="TopoII_MutL_Trans"/>
    <property type="match status" value="1"/>
</dbReference>
<dbReference type="FunFam" id="3.30.565.10:FF:000002">
    <property type="entry name" value="DNA gyrase subunit B"/>
    <property type="match status" value="1"/>
</dbReference>
<dbReference type="FunFam" id="3.40.50.670:FF:000001">
    <property type="entry name" value="DNA topoisomerase 2"/>
    <property type="match status" value="1"/>
</dbReference>
<dbReference type="Gene3D" id="3.30.230.10">
    <property type="match status" value="1"/>
</dbReference>
<dbReference type="Gene3D" id="3.40.50.670">
    <property type="match status" value="1"/>
</dbReference>
<dbReference type="Gene3D" id="3.30.565.10">
    <property type="entry name" value="Histidine kinase-like ATPase, C-terminal domain"/>
    <property type="match status" value="1"/>
</dbReference>
<dbReference type="InterPro" id="IPR002288">
    <property type="entry name" value="DNA_gyrase_B_C"/>
</dbReference>
<dbReference type="InterPro" id="IPR036890">
    <property type="entry name" value="HATPase_C_sf"/>
</dbReference>
<dbReference type="InterPro" id="IPR005740">
    <property type="entry name" value="ParE_type2"/>
</dbReference>
<dbReference type="InterPro" id="IPR020568">
    <property type="entry name" value="Ribosomal_Su5_D2-typ_SF"/>
</dbReference>
<dbReference type="InterPro" id="IPR014721">
    <property type="entry name" value="Ribsml_uS5_D2-typ_fold_subgr"/>
</dbReference>
<dbReference type="InterPro" id="IPR001241">
    <property type="entry name" value="Topo_IIA"/>
</dbReference>
<dbReference type="InterPro" id="IPR013760">
    <property type="entry name" value="Topo_IIA-like_dom_sf"/>
</dbReference>
<dbReference type="InterPro" id="IPR000565">
    <property type="entry name" value="Topo_IIA_B"/>
</dbReference>
<dbReference type="InterPro" id="IPR013759">
    <property type="entry name" value="Topo_IIA_B_C"/>
</dbReference>
<dbReference type="InterPro" id="IPR013506">
    <property type="entry name" value="Topo_IIA_bsu_dom2"/>
</dbReference>
<dbReference type="InterPro" id="IPR018522">
    <property type="entry name" value="TopoIIA_CS"/>
</dbReference>
<dbReference type="InterPro" id="IPR006171">
    <property type="entry name" value="TOPRIM_dom"/>
</dbReference>
<dbReference type="NCBIfam" id="TIGR01058">
    <property type="entry name" value="parE_Gpos"/>
    <property type="match status" value="1"/>
</dbReference>
<dbReference type="NCBIfam" id="NF004189">
    <property type="entry name" value="PRK05644.1"/>
    <property type="match status" value="1"/>
</dbReference>
<dbReference type="PANTHER" id="PTHR45866">
    <property type="entry name" value="DNA GYRASE/TOPOISOMERASE SUBUNIT B"/>
    <property type="match status" value="1"/>
</dbReference>
<dbReference type="PANTHER" id="PTHR45866:SF12">
    <property type="entry name" value="DNA TOPOISOMERASE 4 SUBUNIT B"/>
    <property type="match status" value="1"/>
</dbReference>
<dbReference type="Pfam" id="PF00204">
    <property type="entry name" value="DNA_gyraseB"/>
    <property type="match status" value="1"/>
</dbReference>
<dbReference type="Pfam" id="PF00986">
    <property type="entry name" value="DNA_gyraseB_C"/>
    <property type="match status" value="1"/>
</dbReference>
<dbReference type="Pfam" id="PF02518">
    <property type="entry name" value="HATPase_c"/>
    <property type="match status" value="1"/>
</dbReference>
<dbReference type="Pfam" id="PF01751">
    <property type="entry name" value="Toprim"/>
    <property type="match status" value="1"/>
</dbReference>
<dbReference type="PRINTS" id="PR01159">
    <property type="entry name" value="DNAGYRASEB"/>
</dbReference>
<dbReference type="PRINTS" id="PR00418">
    <property type="entry name" value="TPI2FAMILY"/>
</dbReference>
<dbReference type="SMART" id="SM00387">
    <property type="entry name" value="HATPase_c"/>
    <property type="match status" value="1"/>
</dbReference>
<dbReference type="SMART" id="SM00433">
    <property type="entry name" value="TOP2c"/>
    <property type="match status" value="1"/>
</dbReference>
<dbReference type="SUPFAM" id="SSF55874">
    <property type="entry name" value="ATPase domain of HSP90 chaperone/DNA topoisomerase II/histidine kinase"/>
    <property type="match status" value="1"/>
</dbReference>
<dbReference type="SUPFAM" id="SSF54211">
    <property type="entry name" value="Ribosomal protein S5 domain 2-like"/>
    <property type="match status" value="1"/>
</dbReference>
<dbReference type="SUPFAM" id="SSF56719">
    <property type="entry name" value="Type II DNA topoisomerase"/>
    <property type="match status" value="1"/>
</dbReference>
<dbReference type="PROSITE" id="PS00177">
    <property type="entry name" value="TOPOISOMERASE_II"/>
    <property type="match status" value="1"/>
</dbReference>
<dbReference type="PROSITE" id="PS50880">
    <property type="entry name" value="TOPRIM"/>
    <property type="match status" value="1"/>
</dbReference>
<sequence length="643" mass="72352">MAENKKYDESAIQVLEGLEAVRKRPGMYIGSTDNKGLHHLVWEIVDNAIDEALAGYCTQIDVILEKDNSITVIDNGRGIPTGMHKTGKPTPEVIFSVLHAGGKFDSTAYKSSGGLHGVGSSVTNALSKRFKAIIYRDKKIHEIEFKNGGKLEKPLTFINTTYKTGTTINFLPDDTIFSNAKFNFSLISERLKESALLNSGLKITLSDLISNRYVEYQFQDGLVEFVKELVDDKTPVTDIITINNESKNIIVEIALQYTEDDNEIILGFANNVKTIDGGTHLVGFKSGLIRAINDYAKDQKILKDKTKLDSNDLREGLVAIVTVKIPENLIEYEGQTKSKLGTSDAKTVVEQIVYEFMSYWLIENKVLANKVIENALNAQKARIAAKQARQAIKSVKGKKNVNKLMLGKLTPAQGKKRELNELYLVEGDSAGGSAKSGRDRNFQAILPLRGKVINSEKAKLVDLLKNEEIQSIINAIGAGVGKDFDISDINYGKIIIMTDADTDGAHIQTLLLTFFYRHMKDLIIHKKVYIALPPLYKITFNDKSFIYLWDEEELNKFNKTNTKKYEIQRYKGLGEMNADQLWQTTMDPKNRKIIQVTISDGLLAERMFKTLMGDDVEKRKLWIQENVKFTLEDDQIQIIEMEK</sequence>
<evidence type="ECO:0000250" key="1">
    <source>
        <dbReference type="UniProtKB" id="Q59961"/>
    </source>
</evidence>
<evidence type="ECO:0000255" key="2">
    <source>
        <dbReference type="PROSITE-ProRule" id="PRU00995"/>
    </source>
</evidence>
<evidence type="ECO:0000303" key="3">
    <source>
    </source>
</evidence>
<evidence type="ECO:0000305" key="4"/>
<protein>
    <recommendedName>
        <fullName evidence="4">DNA topoisomerase 4 subunit B</fullName>
        <ecNumber evidence="2">5.6.2.2</ecNumber>
    </recommendedName>
    <alternativeName>
        <fullName>Topoisomerase IV subunit B</fullName>
    </alternativeName>
</protein>
<keyword id="KW-0067">ATP-binding</keyword>
<keyword id="KW-0963">Cytoplasm</keyword>
<keyword id="KW-0238">DNA-binding</keyword>
<keyword id="KW-0413">Isomerase</keyword>
<keyword id="KW-0460">Magnesium</keyword>
<keyword id="KW-0479">Metal-binding</keyword>
<keyword id="KW-0547">Nucleotide-binding</keyword>
<keyword id="KW-0799">Topoisomerase</keyword>
<proteinExistence type="inferred from homology"/>
<comment type="function">
    <text evidence="1">Topoisomerase IV is essential for chromosome segregation. It relaxes supercoiled DNA. Performs the decatenation events required during the replication of a circular DNA molecule.</text>
</comment>
<comment type="catalytic activity">
    <reaction evidence="2">
        <text>ATP-dependent breakage, passage and rejoining of double-stranded DNA.</text>
        <dbReference type="EC" id="5.6.2.2"/>
    </reaction>
</comment>
<comment type="cofactor">
    <cofactor evidence="2">
        <name>Mg(2+)</name>
        <dbReference type="ChEBI" id="CHEBI:18420"/>
    </cofactor>
    <cofactor evidence="2">
        <name>Mn(2+)</name>
        <dbReference type="ChEBI" id="CHEBI:29035"/>
    </cofactor>
    <cofactor evidence="2">
        <name>Ca(2+)</name>
        <dbReference type="ChEBI" id="CHEBI:29108"/>
    </cofactor>
    <text evidence="2">Binds two Mg(2+) per subunit. The magnesium ions form salt bridges with both the protein and the DNA. Can also accept other divalent metal cations, such as Mn(2+) or Ca(2+).</text>
</comment>
<comment type="subunit">
    <text evidence="1">Heterotetramer composed of ParC and ParE.</text>
</comment>
<comment type="subcellular location">
    <subcellularLocation>
        <location evidence="4">Cytoplasm</location>
    </subcellularLocation>
</comment>
<comment type="miscellaneous">
    <text evidence="4">There is a bona fide GyrB elsewhere in this organism (UniProtKB:Q2ST75).</text>
</comment>
<comment type="similarity">
    <text evidence="4">Belongs to the type II topoisomerase family. ParE type 2 subfamily.</text>
</comment>
<reference key="1">
    <citation type="journal article" date="1994" name="Gene">
        <title>The gyrB gene lies opposite from the replication origin on the circular chromosome of Mycoplasma capricolum.</title>
        <authorList>
            <person name="Sano K."/>
            <person name="Miyata M."/>
        </authorList>
    </citation>
    <scope>NUCLEOTIDE SEQUENCE [GENOMIC DNA]</scope>
</reference>
<reference key="2">
    <citation type="submission" date="2005-09" db="EMBL/GenBank/DDBJ databases">
        <authorList>
            <person name="Glass J.I."/>
            <person name="Lartigue C."/>
            <person name="Pfannkoch C."/>
            <person name="Baden-Tillson H."/>
            <person name="Smith H.O."/>
            <person name="Venter J.C."/>
            <person name="Roske K."/>
            <person name="Wise K.S."/>
            <person name="Calcutt M.J."/>
            <person name="Nelson W.C."/>
            <person name="Nierman W.C."/>
        </authorList>
    </citation>
    <scope>NUCLEOTIDE SEQUENCE [LARGE SCALE GENOMIC DNA]</scope>
    <source>
        <strain>California kid / ATCC 27343 / NCTC 10154</strain>
    </source>
</reference>
<organism>
    <name type="scientific">Mycoplasma capricolum subsp. capricolum (strain California kid / ATCC 27343 / NCTC 10154)</name>
    <dbReference type="NCBI Taxonomy" id="340047"/>
    <lineage>
        <taxon>Bacteria</taxon>
        <taxon>Bacillati</taxon>
        <taxon>Mycoplasmatota</taxon>
        <taxon>Mollicutes</taxon>
        <taxon>Mycoplasmataceae</taxon>
        <taxon>Mycoplasma</taxon>
    </lineage>
</organism>
<feature type="chain" id="PRO_0000145317" description="DNA topoisomerase 4 subunit B">
    <location>
        <begin position="1"/>
        <end position="643"/>
    </location>
</feature>
<feature type="domain" description="Toprim" evidence="2">
    <location>
        <begin position="420"/>
        <end position="534"/>
    </location>
</feature>
<feature type="binding site" evidence="2">
    <location>
        <position position="426"/>
    </location>
    <ligand>
        <name>Mg(2+)</name>
        <dbReference type="ChEBI" id="CHEBI:18420"/>
        <label>1</label>
        <note>catalytic</note>
    </ligand>
</feature>
<feature type="binding site" evidence="2">
    <location>
        <position position="499"/>
    </location>
    <ligand>
        <name>Mg(2+)</name>
        <dbReference type="ChEBI" id="CHEBI:18420"/>
        <label>1</label>
        <note>catalytic</note>
    </ligand>
</feature>
<feature type="binding site" evidence="2">
    <location>
        <position position="499"/>
    </location>
    <ligand>
        <name>Mg(2+)</name>
        <dbReference type="ChEBI" id="CHEBI:18420"/>
        <label>2</label>
    </ligand>
</feature>
<feature type="binding site" evidence="2">
    <location>
        <position position="501"/>
    </location>
    <ligand>
        <name>Mg(2+)</name>
        <dbReference type="ChEBI" id="CHEBI:18420"/>
        <label>2</label>
    </ligand>
</feature>
<feature type="site" description="Interaction with DNA" evidence="2">
    <location>
        <position position="451"/>
    </location>
</feature>
<feature type="site" description="Interaction with DNA" evidence="2">
    <location>
        <position position="454"/>
    </location>
</feature>
<feature type="sequence conflict" description="In Ref. 1; BAA04763." evidence="4" ref="1">
    <original>I</original>
    <variation>V</variation>
    <location>
        <position position="392"/>
    </location>
</feature>
<name>PARE_MYCCT</name>